<gene>
    <name type="ordered locus">MIMI_R907</name>
</gene>
<feature type="chain" id="PRO_0000071391" description="Uncharacterized protein R907">
    <location>
        <begin position="1"/>
        <end position="196"/>
    </location>
</feature>
<dbReference type="EMBL" id="AY653733">
    <property type="protein sequence ID" value="AAV51164.1"/>
    <property type="molecule type" value="Genomic_DNA"/>
</dbReference>
<dbReference type="SMR" id="Q5UR01"/>
<dbReference type="KEGG" id="vg:9925576"/>
<dbReference type="OrthoDB" id="31458at10239"/>
<dbReference type="Proteomes" id="UP000001134">
    <property type="component" value="Genome"/>
</dbReference>
<evidence type="ECO:0000305" key="1"/>
<comment type="similarity">
    <text evidence="1">Belongs to the mimivirus R24/R907 family.</text>
</comment>
<accession>Q5UR01</accession>
<organismHost>
    <name type="scientific">Acanthamoeba polyphaga</name>
    <name type="common">Amoeba</name>
    <dbReference type="NCBI Taxonomy" id="5757"/>
</organismHost>
<proteinExistence type="inferred from homology"/>
<sequence>MKLNNFIDFSSILELNYNDFLPLDDNHKSYTYEDNIQLQDDSEARFLIQRAKDSLLSHTKIKDKYIRPKCEWDECEYSCKFYLSTDRKFYCVYFSYDLDFTILYFYGIIEKKTGKHLVVSHEETSDNVYPMMNHHMFNYEWDNYEHEDLRYPPYKYEDDPLELICCLEDQFNVFYEEMCKKNYNDNGSDDSNDDND</sequence>
<organism>
    <name type="scientific">Acanthamoeba polyphaga mimivirus</name>
    <name type="common">APMV</name>
    <dbReference type="NCBI Taxonomy" id="212035"/>
    <lineage>
        <taxon>Viruses</taxon>
        <taxon>Varidnaviria</taxon>
        <taxon>Bamfordvirae</taxon>
        <taxon>Nucleocytoviricota</taxon>
        <taxon>Megaviricetes</taxon>
        <taxon>Imitervirales</taxon>
        <taxon>Mimiviridae</taxon>
        <taxon>Megamimivirinae</taxon>
        <taxon>Mimivirus</taxon>
        <taxon>Mimivirus bradfordmassiliense</taxon>
    </lineage>
</organism>
<protein>
    <recommendedName>
        <fullName>Uncharacterized protein R907</fullName>
    </recommendedName>
</protein>
<name>YR907_MIMIV</name>
<keyword id="KW-1185">Reference proteome</keyword>
<reference key="1">
    <citation type="journal article" date="2004" name="Science">
        <title>The 1.2-megabase genome sequence of Mimivirus.</title>
        <authorList>
            <person name="Raoult D."/>
            <person name="Audic S."/>
            <person name="Robert C."/>
            <person name="Abergel C."/>
            <person name="Renesto P."/>
            <person name="Ogata H."/>
            <person name="La Scola B."/>
            <person name="Susan M."/>
            <person name="Claverie J.-M."/>
        </authorList>
    </citation>
    <scope>NUCLEOTIDE SEQUENCE [LARGE SCALE GENOMIC DNA]</scope>
    <source>
        <strain>Rowbotham-Bradford</strain>
    </source>
</reference>